<name>ADPRH_STAAC</name>
<accession>Q5HIW9</accession>
<gene>
    <name type="ordered locus">SACOL0396</name>
</gene>
<dbReference type="EC" id="3.2.1.-" evidence="2"/>
<dbReference type="EMBL" id="CP000046">
    <property type="protein sequence ID" value="AAW38865.1"/>
    <property type="molecule type" value="Genomic_DNA"/>
</dbReference>
<dbReference type="RefSeq" id="WP_000449061.1">
    <property type="nucleotide sequence ID" value="NZ_JBGOFO010000001.1"/>
</dbReference>
<dbReference type="SMR" id="Q5HIW9"/>
<dbReference type="KEGG" id="sac:SACOL0396"/>
<dbReference type="HOGENOM" id="CLU_046550_2_1_9"/>
<dbReference type="Proteomes" id="UP000000530">
    <property type="component" value="Chromosome"/>
</dbReference>
<dbReference type="GO" id="GO:0016798">
    <property type="term" value="F:hydrolase activity, acting on glycosyl bonds"/>
    <property type="evidence" value="ECO:0007669"/>
    <property type="project" value="UniProtKB-KW"/>
</dbReference>
<dbReference type="CDD" id="cd02908">
    <property type="entry name" value="Macro_OAADPr_deacetylase"/>
    <property type="match status" value="1"/>
</dbReference>
<dbReference type="FunFam" id="3.40.220.10:FF:000018">
    <property type="entry name" value="Protein-ADP-ribose hydrolase"/>
    <property type="match status" value="1"/>
</dbReference>
<dbReference type="Gene3D" id="3.40.220.10">
    <property type="entry name" value="Leucine Aminopeptidase, subunit E, domain 1"/>
    <property type="match status" value="1"/>
</dbReference>
<dbReference type="InterPro" id="IPR002589">
    <property type="entry name" value="Macro_dom"/>
</dbReference>
<dbReference type="InterPro" id="IPR043472">
    <property type="entry name" value="Macro_dom-like"/>
</dbReference>
<dbReference type="NCBIfam" id="NF003163">
    <property type="entry name" value="PRK04143.1"/>
    <property type="match status" value="1"/>
</dbReference>
<dbReference type="PANTHER" id="PTHR11106">
    <property type="entry name" value="GANGLIOSIDE INDUCED DIFFERENTIATION ASSOCIATED PROTEIN 2-RELATED"/>
    <property type="match status" value="1"/>
</dbReference>
<dbReference type="PANTHER" id="PTHR11106:SF27">
    <property type="entry name" value="MACRO DOMAIN-CONTAINING PROTEIN"/>
    <property type="match status" value="1"/>
</dbReference>
<dbReference type="Pfam" id="PF01661">
    <property type="entry name" value="Macro"/>
    <property type="match status" value="1"/>
</dbReference>
<dbReference type="SMART" id="SM00506">
    <property type="entry name" value="A1pp"/>
    <property type="match status" value="1"/>
</dbReference>
<dbReference type="SUPFAM" id="SSF52949">
    <property type="entry name" value="Macro domain-like"/>
    <property type="match status" value="1"/>
</dbReference>
<dbReference type="PROSITE" id="PS51154">
    <property type="entry name" value="MACRO"/>
    <property type="match status" value="1"/>
</dbReference>
<evidence type="ECO:0000250" key="1">
    <source>
        <dbReference type="UniProtKB" id="P0DN70"/>
    </source>
</evidence>
<evidence type="ECO:0000250" key="2">
    <source>
        <dbReference type="UniProtKB" id="P67343"/>
    </source>
</evidence>
<evidence type="ECO:0000255" key="3">
    <source>
        <dbReference type="PROSITE-ProRule" id="PRU00490"/>
    </source>
</evidence>
<evidence type="ECO:0000305" key="4"/>
<feature type="chain" id="PRO_0000089208" description="Protein-ADP-ribose hydrolase">
    <location>
        <begin position="1"/>
        <end position="266"/>
    </location>
</feature>
<feature type="domain" description="Macro" evidence="3">
    <location>
        <begin position="74"/>
        <end position="265"/>
    </location>
</feature>
<feature type="binding site" evidence="1">
    <location>
        <position position="93"/>
    </location>
    <ligand>
        <name>ADP-D-ribose</name>
        <dbReference type="ChEBI" id="CHEBI:57967"/>
    </ligand>
</feature>
<feature type="binding site" evidence="1">
    <location>
        <position position="94"/>
    </location>
    <ligand>
        <name>ADP-D-ribose</name>
        <dbReference type="ChEBI" id="CHEBI:57967"/>
    </ligand>
</feature>
<feature type="binding site" evidence="1">
    <location>
        <position position="107"/>
    </location>
    <ligand>
        <name>ADP-D-ribose</name>
        <dbReference type="ChEBI" id="CHEBI:57967"/>
    </ligand>
</feature>
<feature type="binding site" evidence="1">
    <location>
        <position position="113"/>
    </location>
    <ligand>
        <name>Zn(2+)</name>
        <dbReference type="ChEBI" id="CHEBI:29105"/>
    </ligand>
</feature>
<feature type="binding site" evidence="1">
    <location>
        <position position="118"/>
    </location>
    <ligand>
        <name>Zn(2+)</name>
        <dbReference type="ChEBI" id="CHEBI:29105"/>
    </ligand>
</feature>
<feature type="binding site" evidence="1">
    <location>
        <position position="120"/>
    </location>
    <ligand>
        <name>ADP-D-ribose</name>
        <dbReference type="ChEBI" id="CHEBI:57967"/>
    </ligand>
</feature>
<feature type="binding site" evidence="1">
    <location>
        <position position="120"/>
    </location>
    <ligand>
        <name>Zn(2+)</name>
        <dbReference type="ChEBI" id="CHEBI:29105"/>
    </ligand>
</feature>
<feature type="binding site" evidence="1">
    <location>
        <position position="121"/>
    </location>
    <ligand>
        <name>ADP-D-ribose</name>
        <dbReference type="ChEBI" id="CHEBI:57967"/>
    </ligand>
</feature>
<feature type="binding site" evidence="1">
    <location>
        <position position="122"/>
    </location>
    <ligand>
        <name>ADP-D-ribose</name>
        <dbReference type="ChEBI" id="CHEBI:57967"/>
    </ligand>
</feature>
<feature type="binding site" evidence="1">
    <location>
        <position position="212"/>
    </location>
    <ligand>
        <name>ADP-D-ribose</name>
        <dbReference type="ChEBI" id="CHEBI:57967"/>
    </ligand>
</feature>
<feature type="binding site" evidence="1">
    <location>
        <position position="213"/>
    </location>
    <ligand>
        <name>ADP-D-ribose</name>
        <dbReference type="ChEBI" id="CHEBI:57967"/>
    </ligand>
</feature>
<feature type="binding site" evidence="1">
    <location>
        <position position="214"/>
    </location>
    <ligand>
        <name>ADP-D-ribose</name>
        <dbReference type="ChEBI" id="CHEBI:57967"/>
    </ligand>
</feature>
<feature type="binding site" evidence="1">
    <location>
        <position position="216"/>
    </location>
    <ligand>
        <name>ADP-D-ribose</name>
        <dbReference type="ChEBI" id="CHEBI:57967"/>
    </ligand>
</feature>
<sequence>METLKSNKARLEYLINDMHRERNDNDVLVMPSSFEDLWELYRGLANVRPALPVSDEYLAVQDAMLSDLNRQHVTDLKDLKPIKGDNIFVWQGDITTLKIDAIVNAANSRFLGCMQANHDCIDNIIHTKAGVQVRLDCAEIIRQQGRNEGVGKAKITRGYNLSAKYIIHTVGPQIRRLPVSKMNQDLLAKCYLSCLKLADQHSLNHVAFCCISTGVFAFPQDEAAEIAVRTVESYLKETNSTLKVVFNVFTDKDLQLYKEAFNRDAE</sequence>
<protein>
    <recommendedName>
        <fullName evidence="2">Protein-ADP-ribose hydrolase</fullName>
        <ecNumber evidence="2">3.2.1.-</ecNumber>
    </recommendedName>
</protein>
<keyword id="KW-0326">Glycosidase</keyword>
<keyword id="KW-0378">Hydrolase</keyword>
<keyword id="KW-0479">Metal-binding</keyword>
<keyword id="KW-0862">Zinc</keyword>
<comment type="function">
    <text evidence="2">ADP-ribosylhydrolase that specifically reverses the SirTM-mediated mono-ADP-ribosylation at an asparatate residue of GcvH-L, by releasing ADP-ribose from the target protein (By similarity). May play a role in the regulation of the response to host-induced oxidative stress (By similarity).</text>
</comment>
<comment type="catalytic activity">
    <reaction evidence="2">
        <text>4-O-(ADP-D-ribosyl)-L-aspartyl-[protein] + H2O = L-aspartyl-[protein] + ADP-D-ribose + H(+)</text>
        <dbReference type="Rhea" id="RHEA:54428"/>
        <dbReference type="Rhea" id="RHEA-COMP:9867"/>
        <dbReference type="Rhea" id="RHEA-COMP:13832"/>
        <dbReference type="ChEBI" id="CHEBI:15377"/>
        <dbReference type="ChEBI" id="CHEBI:15378"/>
        <dbReference type="ChEBI" id="CHEBI:29961"/>
        <dbReference type="ChEBI" id="CHEBI:57967"/>
        <dbReference type="ChEBI" id="CHEBI:138102"/>
    </reaction>
    <physiologicalReaction direction="left-to-right" evidence="2">
        <dbReference type="Rhea" id="RHEA:54429"/>
    </physiologicalReaction>
</comment>
<comment type="cofactor">
    <cofactor evidence="2">
        <name>Zn(2+)</name>
        <dbReference type="ChEBI" id="CHEBI:29105"/>
    </cofactor>
    <text evidence="2">Binds 1 Zn(2+) ion per subunit.</text>
</comment>
<comment type="similarity">
    <text evidence="4">Belongs to the MacroD-type family. Zn-Macro subfamily.</text>
</comment>
<reference key="1">
    <citation type="journal article" date="2005" name="J. Bacteriol.">
        <title>Insights on evolution of virulence and resistance from the complete genome analysis of an early methicillin-resistant Staphylococcus aureus strain and a biofilm-producing methicillin-resistant Staphylococcus epidermidis strain.</title>
        <authorList>
            <person name="Gill S.R."/>
            <person name="Fouts D.E."/>
            <person name="Archer G.L."/>
            <person name="Mongodin E.F."/>
            <person name="DeBoy R.T."/>
            <person name="Ravel J."/>
            <person name="Paulsen I.T."/>
            <person name="Kolonay J.F."/>
            <person name="Brinkac L.M."/>
            <person name="Beanan M.J."/>
            <person name="Dodson R.J."/>
            <person name="Daugherty S.C."/>
            <person name="Madupu R."/>
            <person name="Angiuoli S.V."/>
            <person name="Durkin A.S."/>
            <person name="Haft D.H."/>
            <person name="Vamathevan J.J."/>
            <person name="Khouri H."/>
            <person name="Utterback T.R."/>
            <person name="Lee C."/>
            <person name="Dimitrov G."/>
            <person name="Jiang L."/>
            <person name="Qin H."/>
            <person name="Weidman J."/>
            <person name="Tran K."/>
            <person name="Kang K.H."/>
            <person name="Hance I.R."/>
            <person name="Nelson K.E."/>
            <person name="Fraser C.M."/>
        </authorList>
    </citation>
    <scope>NUCLEOTIDE SEQUENCE [LARGE SCALE GENOMIC DNA]</scope>
    <source>
        <strain>COL</strain>
    </source>
</reference>
<proteinExistence type="inferred from homology"/>
<organism>
    <name type="scientific">Staphylococcus aureus (strain COL)</name>
    <dbReference type="NCBI Taxonomy" id="93062"/>
    <lineage>
        <taxon>Bacteria</taxon>
        <taxon>Bacillati</taxon>
        <taxon>Bacillota</taxon>
        <taxon>Bacilli</taxon>
        <taxon>Bacillales</taxon>
        <taxon>Staphylococcaceae</taxon>
        <taxon>Staphylococcus</taxon>
    </lineage>
</organism>